<sequence length="148" mass="17183">MSVEIESIEHELEESIASLRQAGVRITPQRQAILRYLISSHTHPTADEIYQALSPDFPNISVATIYNNLRVFKDIGIVKELTYGDSSSRFDFNTHNHYHIICEQCGKIVDFQYPQLNEIERLAQHMTDFDVTHHRMEIYGVCKECQDK</sequence>
<proteinExistence type="inferred from homology"/>
<reference key="1">
    <citation type="journal article" date="2006" name="Lancet">
        <title>Complete genome sequence of USA300, an epidemic clone of community-acquired meticillin-resistant Staphylococcus aureus.</title>
        <authorList>
            <person name="Diep B.A."/>
            <person name="Gill S.R."/>
            <person name="Chang R.F."/>
            <person name="Phan T.H."/>
            <person name="Chen J.H."/>
            <person name="Davidson M.G."/>
            <person name="Lin F."/>
            <person name="Lin J."/>
            <person name="Carleton H.A."/>
            <person name="Mongodin E.F."/>
            <person name="Sensabaugh G.F."/>
            <person name="Perdreau-Remington F."/>
        </authorList>
    </citation>
    <scope>NUCLEOTIDE SEQUENCE [LARGE SCALE GENOMIC DNA]</scope>
    <source>
        <strain>USA300</strain>
    </source>
</reference>
<feature type="chain" id="PRO_0000289018" description="Peroxide-responsive repressor PerR">
    <location>
        <begin position="1"/>
        <end position="148"/>
    </location>
</feature>
<feature type="region of interest" description="DNA-binding" evidence="1">
    <location>
        <begin position="1"/>
        <end position="84"/>
    </location>
</feature>
<feature type="binding site" evidence="1">
    <location>
        <position position="102"/>
    </location>
    <ligand>
        <name>Zn(2+)</name>
        <dbReference type="ChEBI" id="CHEBI:29105"/>
    </ligand>
</feature>
<feature type="binding site" evidence="1">
    <location>
        <position position="105"/>
    </location>
    <ligand>
        <name>Zn(2+)</name>
        <dbReference type="ChEBI" id="CHEBI:29105"/>
    </ligand>
</feature>
<feature type="binding site" evidence="1">
    <location>
        <position position="142"/>
    </location>
    <ligand>
        <name>Zn(2+)</name>
        <dbReference type="ChEBI" id="CHEBI:29105"/>
    </ligand>
</feature>
<feature type="binding site" evidence="1">
    <location>
        <position position="145"/>
    </location>
    <ligand>
        <name>Zn(2+)</name>
        <dbReference type="ChEBI" id="CHEBI:29105"/>
    </ligand>
</feature>
<dbReference type="EMBL" id="CP000255">
    <property type="protein sequence ID" value="ABD20839.1"/>
    <property type="molecule type" value="Genomic_DNA"/>
</dbReference>
<dbReference type="RefSeq" id="WP_000110011.1">
    <property type="nucleotide sequence ID" value="NZ_CP027476.1"/>
</dbReference>
<dbReference type="SMR" id="Q2FFN4"/>
<dbReference type="GeneID" id="98346243"/>
<dbReference type="KEGG" id="saa:SAUSA300_1842"/>
<dbReference type="HOGENOM" id="CLU_096072_4_2_9"/>
<dbReference type="OMA" id="HDHVILT"/>
<dbReference type="Proteomes" id="UP000001939">
    <property type="component" value="Chromosome"/>
</dbReference>
<dbReference type="GO" id="GO:0005737">
    <property type="term" value="C:cytoplasm"/>
    <property type="evidence" value="ECO:0007669"/>
    <property type="project" value="UniProtKB-SubCell"/>
</dbReference>
<dbReference type="GO" id="GO:0003700">
    <property type="term" value="F:DNA-binding transcription factor activity"/>
    <property type="evidence" value="ECO:0007669"/>
    <property type="project" value="InterPro"/>
</dbReference>
<dbReference type="GO" id="GO:0000976">
    <property type="term" value="F:transcription cis-regulatory region binding"/>
    <property type="evidence" value="ECO:0007669"/>
    <property type="project" value="TreeGrafter"/>
</dbReference>
<dbReference type="GO" id="GO:0008270">
    <property type="term" value="F:zinc ion binding"/>
    <property type="evidence" value="ECO:0007669"/>
    <property type="project" value="TreeGrafter"/>
</dbReference>
<dbReference type="GO" id="GO:0045892">
    <property type="term" value="P:negative regulation of DNA-templated transcription"/>
    <property type="evidence" value="ECO:0007669"/>
    <property type="project" value="TreeGrafter"/>
</dbReference>
<dbReference type="GO" id="GO:1900376">
    <property type="term" value="P:regulation of secondary metabolite biosynthetic process"/>
    <property type="evidence" value="ECO:0007669"/>
    <property type="project" value="TreeGrafter"/>
</dbReference>
<dbReference type="CDD" id="cd07153">
    <property type="entry name" value="Fur_like"/>
    <property type="match status" value="1"/>
</dbReference>
<dbReference type="FunFam" id="1.10.10.10:FF:000147">
    <property type="entry name" value="Fur family transcriptional regulator"/>
    <property type="match status" value="1"/>
</dbReference>
<dbReference type="FunFam" id="3.30.1490.190:FF:000003">
    <property type="entry name" value="Fur family transcriptional regulator"/>
    <property type="match status" value="1"/>
</dbReference>
<dbReference type="Gene3D" id="3.30.1490.190">
    <property type="match status" value="1"/>
</dbReference>
<dbReference type="Gene3D" id="1.10.10.10">
    <property type="entry name" value="Winged helix-like DNA-binding domain superfamily/Winged helix DNA-binding domain"/>
    <property type="match status" value="1"/>
</dbReference>
<dbReference type="InterPro" id="IPR002481">
    <property type="entry name" value="FUR"/>
</dbReference>
<dbReference type="InterPro" id="IPR043135">
    <property type="entry name" value="Fur_C"/>
</dbReference>
<dbReference type="InterPro" id="IPR036388">
    <property type="entry name" value="WH-like_DNA-bd_sf"/>
</dbReference>
<dbReference type="InterPro" id="IPR036390">
    <property type="entry name" value="WH_DNA-bd_sf"/>
</dbReference>
<dbReference type="PANTHER" id="PTHR33202:SF8">
    <property type="entry name" value="PEROXIDE-RESPONSIVE REPRESSOR PERR"/>
    <property type="match status" value="1"/>
</dbReference>
<dbReference type="PANTHER" id="PTHR33202">
    <property type="entry name" value="ZINC UPTAKE REGULATION PROTEIN"/>
    <property type="match status" value="1"/>
</dbReference>
<dbReference type="Pfam" id="PF01475">
    <property type="entry name" value="FUR"/>
    <property type="match status" value="1"/>
</dbReference>
<dbReference type="SUPFAM" id="SSF46785">
    <property type="entry name" value="Winged helix' DNA-binding domain"/>
    <property type="match status" value="1"/>
</dbReference>
<comment type="function">
    <text evidence="1">Manganese-dependent repressor that controls a regulon of oxidative stress resistance and iron-storage proteins. May act as a hydrogen peroxide and organic hydroperoxide sensor (By similarity).</text>
</comment>
<comment type="subcellular location">
    <subcellularLocation>
        <location evidence="1">Cytoplasm</location>
    </subcellularLocation>
</comment>
<comment type="similarity">
    <text evidence="2">Belongs to the Fur family.</text>
</comment>
<keyword id="KW-0963">Cytoplasm</keyword>
<keyword id="KW-0238">DNA-binding</keyword>
<keyword id="KW-0464">Manganese</keyword>
<keyword id="KW-0479">Metal-binding</keyword>
<keyword id="KW-0678">Repressor</keyword>
<keyword id="KW-0804">Transcription</keyword>
<keyword id="KW-0805">Transcription regulation</keyword>
<keyword id="KW-0862">Zinc</keyword>
<evidence type="ECO:0000250" key="1"/>
<evidence type="ECO:0000305" key="2"/>
<protein>
    <recommendedName>
        <fullName>Peroxide-responsive repressor PerR</fullName>
    </recommendedName>
</protein>
<gene>
    <name type="primary">perR</name>
    <name type="ordered locus">SAUSA300_1842</name>
</gene>
<name>PERR_STAA3</name>
<organism>
    <name type="scientific">Staphylococcus aureus (strain USA300)</name>
    <dbReference type="NCBI Taxonomy" id="367830"/>
    <lineage>
        <taxon>Bacteria</taxon>
        <taxon>Bacillati</taxon>
        <taxon>Bacillota</taxon>
        <taxon>Bacilli</taxon>
        <taxon>Bacillales</taxon>
        <taxon>Staphylococcaceae</taxon>
        <taxon>Staphylococcus</taxon>
    </lineage>
</organism>
<accession>Q2FFN4</accession>